<proteinExistence type="evidence at protein level"/>
<accession>Q698K8</accession>
<comment type="function">
    <molecule>Snake venom metalloproteinase brevilysin L4</molecule>
    <text evidence="1 5 7">metalloproteinase that impairs hemostasis in the envenomed animal (By similarity). Shows autoproteolysis dependent on pH and temperature. Does not show hemorrhagic activity.</text>
</comment>
<comment type="function">
    <molecule>Disintegrin brevicaudin-1a</molecule>
    <text>Inhibits platelet aggregation induced by ADP (IC(50) is 200 nM), collagen (IC(50) is 500 nM), thrombin and epinephrin (IC(50) is 300 nM). Does not inhibit aggregation induced by ristocetin.</text>
</comment>
<comment type="function">
    <molecule>Disintegrin brevicaudin-1b</molecule>
    <text>Inhibits platelet aggregation induced by ADP (IC(50) is 100 nM), collagen (IC(50) is 500 nM), thrombin and epinephrin (IC(50) is 300 nM). Does not inhibit aggregation induced by ristocetin. Significantly inhibits angiogenesis both in vivo and in vitro.</text>
</comment>
<comment type="cofactor">
    <cofactor evidence="1">
        <name>Zn(2+)</name>
        <dbReference type="ChEBI" id="CHEBI:29105"/>
    </cofactor>
    <text evidence="1">Binds 1 zinc ion per subunit.</text>
</comment>
<comment type="activity regulation">
    <text evidence="5">Excess of calcium ions significantly suppress the autoproteolysis of the enzyme.</text>
</comment>
<comment type="subunit">
    <text>Monomer.</text>
</comment>
<comment type="subcellular location">
    <subcellularLocation>
        <location>Secreted</location>
    </subcellularLocation>
</comment>
<comment type="tissue specificity">
    <text>Expressed by the venom gland.</text>
</comment>
<comment type="mass spectrometry" mass="22752.0" method="MALDI" evidence="6">
    <molecule>Snake venom metalloproteinase brevilysin L4</molecule>
</comment>
<comment type="miscellaneous">
    <text>The disintegrins belong to the medium disintegrin subfamily.</text>
</comment>
<comment type="similarity">
    <text evidence="8">Belongs to the venom metalloproteinase (M12B) family. P-II subfamily. P-IIa sub-subfamily.</text>
</comment>
<comment type="caution">
    <text evidence="8">The metalloprotease is also encoded by another precursor (AC Q90WC0).</text>
</comment>
<comment type="sequence caution" evidence="8">
    <conflict type="erroneous termination">
        <sequence resource="EMBL-CDS" id="AAT76292"/>
    </conflict>
    <text>Extended C-terminus.</text>
</comment>
<keyword id="KW-0106">Calcium</keyword>
<keyword id="KW-1217">Cell adhesion impairing toxin</keyword>
<keyword id="KW-0903">Direct protein sequencing</keyword>
<keyword id="KW-1015">Disulfide bond</keyword>
<keyword id="KW-1199">Hemostasis impairing toxin</keyword>
<keyword id="KW-0378">Hydrolase</keyword>
<keyword id="KW-0479">Metal-binding</keyword>
<keyword id="KW-0482">Metalloprotease</keyword>
<keyword id="KW-1201">Platelet aggregation inhibiting toxin</keyword>
<keyword id="KW-0645">Protease</keyword>
<keyword id="KW-0964">Secreted</keyword>
<keyword id="KW-0800">Toxin</keyword>
<keyword id="KW-0862">Zinc</keyword>
<keyword id="KW-0865">Zymogen</keyword>
<organism>
    <name type="scientific">Gloydius brevicauda</name>
    <name type="common">Korean slamosa snake</name>
    <name type="synonym">Agkistrodon halys brevicaudus</name>
    <dbReference type="NCBI Taxonomy" id="3148161"/>
    <lineage>
        <taxon>Eukaryota</taxon>
        <taxon>Metazoa</taxon>
        <taxon>Chordata</taxon>
        <taxon>Craniata</taxon>
        <taxon>Vertebrata</taxon>
        <taxon>Euteleostomi</taxon>
        <taxon>Lepidosauria</taxon>
        <taxon>Squamata</taxon>
        <taxon>Bifurcata</taxon>
        <taxon>Unidentata</taxon>
        <taxon>Episquamata</taxon>
        <taxon>Toxicofera</taxon>
        <taxon>Serpentes</taxon>
        <taxon>Colubroidea</taxon>
        <taxon>Viperidae</taxon>
        <taxon>Crotalinae</taxon>
        <taxon>Gloydius</taxon>
    </lineage>
</organism>
<feature type="propeptide" id="PRO_0000424444" evidence="1">
    <location>
        <begin position="1" status="less than"/>
        <end position="28"/>
    </location>
</feature>
<feature type="chain" id="PRO_0000424445" description="Snake venom metalloproteinase brevilysin L4">
    <location>
        <begin position="29"/>
        <end position="230"/>
    </location>
</feature>
<feature type="propeptide" id="PRO_0000424446" evidence="1">
    <location>
        <begin position="231"/>
        <end position="246"/>
    </location>
</feature>
<feature type="chain" id="PRO_0000318180" description="Disintegrin brevicaudin-1b">
    <location>
        <begin position="247"/>
        <end position="319"/>
    </location>
</feature>
<feature type="chain" id="PRO_0000424447" description="Disintegrin brevicaudin-1a">
    <location>
        <begin position="249"/>
        <end position="319"/>
    </location>
</feature>
<feature type="domain" description="Peptidase M12B" evidence="4">
    <location>
        <begin position="34"/>
        <end position="230"/>
    </location>
</feature>
<feature type="domain" description="Disintegrin" evidence="3">
    <location>
        <begin position="238"/>
        <end position="319"/>
    </location>
</feature>
<feature type="short sequence motif" description="Cell attachment site">
    <location>
        <begin position="297"/>
        <end position="299"/>
    </location>
</feature>
<feature type="active site" evidence="4">
    <location>
        <position position="171"/>
    </location>
</feature>
<feature type="binding site" evidence="1">
    <location>
        <position position="37"/>
    </location>
    <ligand>
        <name>Ca(2+)</name>
        <dbReference type="ChEBI" id="CHEBI:29108"/>
    </ligand>
</feature>
<feature type="binding site" evidence="1">
    <location>
        <position position="121"/>
    </location>
    <ligand>
        <name>Ca(2+)</name>
        <dbReference type="ChEBI" id="CHEBI:29108"/>
    </ligand>
</feature>
<feature type="binding site" evidence="4">
    <location>
        <position position="170"/>
    </location>
    <ligand>
        <name>Zn(2+)</name>
        <dbReference type="ChEBI" id="CHEBI:29105"/>
        <note>catalytic</note>
    </ligand>
</feature>
<feature type="binding site" evidence="4">
    <location>
        <position position="174"/>
    </location>
    <ligand>
        <name>Zn(2+)</name>
        <dbReference type="ChEBI" id="CHEBI:29105"/>
        <note>catalytic</note>
    </ligand>
</feature>
<feature type="binding site" evidence="4">
    <location>
        <position position="180"/>
    </location>
    <ligand>
        <name>Zn(2+)</name>
        <dbReference type="ChEBI" id="CHEBI:29105"/>
        <note>catalytic</note>
    </ligand>
</feature>
<feature type="binding site" evidence="1">
    <location>
        <position position="225"/>
    </location>
    <ligand>
        <name>Ca(2+)</name>
        <dbReference type="ChEBI" id="CHEBI:29108"/>
    </ligand>
</feature>
<feature type="binding site" evidence="1">
    <location>
        <position position="228"/>
    </location>
    <ligand>
        <name>Ca(2+)</name>
        <dbReference type="ChEBI" id="CHEBI:29108"/>
    </ligand>
</feature>
<feature type="disulfide bond" evidence="4">
    <location>
        <begin position="145"/>
        <end position="225"/>
    </location>
</feature>
<feature type="disulfide bond" evidence="4">
    <location>
        <begin position="185"/>
        <end position="209"/>
    </location>
</feature>
<feature type="disulfide bond" evidence="4">
    <location>
        <begin position="187"/>
        <end position="192"/>
    </location>
</feature>
<feature type="disulfide bond" evidence="2">
    <location>
        <begin position="252"/>
        <end position="267"/>
    </location>
</feature>
<feature type="disulfide bond" evidence="2">
    <location>
        <begin position="254"/>
        <end position="262"/>
    </location>
</feature>
<feature type="disulfide bond" evidence="2">
    <location>
        <begin position="261"/>
        <end position="284"/>
    </location>
</feature>
<feature type="disulfide bond" evidence="2">
    <location>
        <begin position="275"/>
        <end position="281"/>
    </location>
</feature>
<feature type="disulfide bond" evidence="2">
    <location>
        <begin position="280"/>
        <end position="305"/>
    </location>
</feature>
<feature type="disulfide bond" evidence="2 3">
    <location>
        <begin position="293"/>
        <end position="312"/>
    </location>
</feature>
<feature type="sequence conflict" description="In Ref. 2; AAT76292." evidence="8" ref="2">
    <original>ELL</original>
    <variation>MHM</variation>
    <location>
        <begin position="244"/>
        <end position="246"/>
    </location>
</feature>
<feature type="non-terminal residue">
    <location>
        <position position="1"/>
    </location>
</feature>
<protein>
    <recommendedName>
        <fullName>Zinc metalloproteinase/disintegrin</fullName>
    </recommendedName>
    <component>
        <recommendedName>
            <fullName>Snake venom metalloproteinase brevilysin L4</fullName>
            <shortName>SVMP</shortName>
        </recommendedName>
        <alternativeName>
            <fullName>Snake venom metalloproteinase hxl-1</fullName>
            <ecNumber>3.4.24.-</ecNumber>
        </alternativeName>
    </component>
    <component>
        <recommendedName>
            <fullName>Disintegrin brevicaudin-1a</fullName>
        </recommendedName>
    </component>
    <component>
        <recommendedName>
            <fullName>Disintegrin brevicaudin-1b</fullName>
        </recommendedName>
        <alternativeName>
            <fullName>Disintegrin adinbitor</fullName>
        </alternativeName>
        <alternativeName>
            <fullName>Disintegrin halystatin</fullName>
        </alternativeName>
    </component>
</protein>
<name>VM2L4_GLOBR</name>
<evidence type="ECO:0000250" key="1"/>
<evidence type="ECO:0000250" key="2">
    <source>
        <dbReference type="UniProtKB" id="Q0NZX5"/>
    </source>
</evidence>
<evidence type="ECO:0000255" key="3">
    <source>
        <dbReference type="PROSITE-ProRule" id="PRU00068"/>
    </source>
</evidence>
<evidence type="ECO:0000255" key="4">
    <source>
        <dbReference type="PROSITE-ProRule" id="PRU00276"/>
    </source>
</evidence>
<evidence type="ECO:0000269" key="5">
    <source>
    </source>
</evidence>
<evidence type="ECO:0000269" key="6">
    <source>
    </source>
</evidence>
<evidence type="ECO:0000269" key="7">
    <source ref="3"/>
</evidence>
<evidence type="ECO:0000305" key="8"/>
<dbReference type="EC" id="3.4.24.-"/>
<dbReference type="EMBL" id="AY551929">
    <property type="protein sequence ID" value="AAT76292.1"/>
    <property type="status" value="ALT_TERM"/>
    <property type="molecule type" value="mRNA"/>
</dbReference>
<dbReference type="PIR" id="A59410">
    <property type="entry name" value="A59410"/>
</dbReference>
<dbReference type="PIR" id="A59411">
    <property type="entry name" value="A59411"/>
</dbReference>
<dbReference type="SMR" id="Q698K8"/>
<dbReference type="GO" id="GO:0005576">
    <property type="term" value="C:extracellular region"/>
    <property type="evidence" value="ECO:0007669"/>
    <property type="project" value="UniProtKB-SubCell"/>
</dbReference>
<dbReference type="GO" id="GO:0005886">
    <property type="term" value="C:plasma membrane"/>
    <property type="evidence" value="ECO:0007669"/>
    <property type="project" value="TreeGrafter"/>
</dbReference>
<dbReference type="GO" id="GO:0046872">
    <property type="term" value="F:metal ion binding"/>
    <property type="evidence" value="ECO:0007669"/>
    <property type="project" value="UniProtKB-KW"/>
</dbReference>
<dbReference type="GO" id="GO:0004222">
    <property type="term" value="F:metalloendopeptidase activity"/>
    <property type="evidence" value="ECO:0007669"/>
    <property type="project" value="InterPro"/>
</dbReference>
<dbReference type="GO" id="GO:0090729">
    <property type="term" value="F:toxin activity"/>
    <property type="evidence" value="ECO:0007669"/>
    <property type="project" value="UniProtKB-KW"/>
</dbReference>
<dbReference type="GO" id="GO:0006508">
    <property type="term" value="P:proteolysis"/>
    <property type="evidence" value="ECO:0007669"/>
    <property type="project" value="UniProtKB-KW"/>
</dbReference>
<dbReference type="CDD" id="cd04269">
    <property type="entry name" value="ZnMc_adamalysin_II_like"/>
    <property type="match status" value="1"/>
</dbReference>
<dbReference type="FunFam" id="3.40.390.10:FF:000002">
    <property type="entry name" value="Disintegrin and metalloproteinase domain-containing protein 22"/>
    <property type="match status" value="1"/>
</dbReference>
<dbReference type="FunFam" id="4.10.70.10:FF:000005">
    <property type="entry name" value="Zinc metalloproteinase/disintegrin"/>
    <property type="match status" value="1"/>
</dbReference>
<dbReference type="Gene3D" id="3.40.390.10">
    <property type="entry name" value="Collagenase (Catalytic Domain)"/>
    <property type="match status" value="1"/>
</dbReference>
<dbReference type="Gene3D" id="4.10.70.10">
    <property type="entry name" value="Disintegrin domain"/>
    <property type="match status" value="1"/>
</dbReference>
<dbReference type="InterPro" id="IPR018358">
    <property type="entry name" value="Disintegrin_CS"/>
</dbReference>
<dbReference type="InterPro" id="IPR001762">
    <property type="entry name" value="Disintegrin_dom"/>
</dbReference>
<dbReference type="InterPro" id="IPR036436">
    <property type="entry name" value="Disintegrin_dom_sf"/>
</dbReference>
<dbReference type="InterPro" id="IPR024079">
    <property type="entry name" value="MetalloPept_cat_dom_sf"/>
</dbReference>
<dbReference type="InterPro" id="IPR001590">
    <property type="entry name" value="Peptidase_M12B"/>
</dbReference>
<dbReference type="InterPro" id="IPR034027">
    <property type="entry name" value="Reprolysin_adamalysin"/>
</dbReference>
<dbReference type="PANTHER" id="PTHR11905">
    <property type="entry name" value="ADAM A DISINTEGRIN AND METALLOPROTEASE DOMAIN"/>
    <property type="match status" value="1"/>
</dbReference>
<dbReference type="PANTHER" id="PTHR11905:SF32">
    <property type="entry name" value="DISINTEGRIN AND METALLOPROTEINASE DOMAIN-CONTAINING PROTEIN 28"/>
    <property type="match status" value="1"/>
</dbReference>
<dbReference type="Pfam" id="PF00200">
    <property type="entry name" value="Disintegrin"/>
    <property type="match status" value="1"/>
</dbReference>
<dbReference type="Pfam" id="PF01421">
    <property type="entry name" value="Reprolysin"/>
    <property type="match status" value="1"/>
</dbReference>
<dbReference type="PRINTS" id="PR00289">
    <property type="entry name" value="DISINTEGRIN"/>
</dbReference>
<dbReference type="SMART" id="SM00050">
    <property type="entry name" value="DISIN"/>
    <property type="match status" value="1"/>
</dbReference>
<dbReference type="SUPFAM" id="SSF57552">
    <property type="entry name" value="Blood coagulation inhibitor (disintegrin)"/>
    <property type="match status" value="1"/>
</dbReference>
<dbReference type="SUPFAM" id="SSF55486">
    <property type="entry name" value="Metalloproteases ('zincins'), catalytic domain"/>
    <property type="match status" value="1"/>
</dbReference>
<dbReference type="PROSITE" id="PS50215">
    <property type="entry name" value="ADAM_MEPRO"/>
    <property type="match status" value="1"/>
</dbReference>
<dbReference type="PROSITE" id="PS00427">
    <property type="entry name" value="DISINTEGRIN_1"/>
    <property type="match status" value="1"/>
</dbReference>
<dbReference type="PROSITE" id="PS50214">
    <property type="entry name" value="DISINTEGRIN_2"/>
    <property type="match status" value="1"/>
</dbReference>
<dbReference type="PROSITE" id="PS00142">
    <property type="entry name" value="ZINC_PROTEASE"/>
    <property type="match status" value="1"/>
</dbReference>
<sequence length="319" mass="35314">EDEAPKMCGVTQNWESYEPIKKASQSNLTPAHQRYIELVIVADHGMFTKYNGDSDKIREWVRQMVNTVDEIYSYMYIDVALAGLEIWSNEDLINVQPAAPHTLDSFGKWRERDLLHRIHHDNAMLLTAIDFDGPTIGLAYVGTMCKPKGSTGVVQDHSTINLRVAVTMAHEIGHNLGIHHDTGSCSCGGYSCIMSPVISHEPSKYFSDCSYTQCWDFIMNQKPQCILNKPLRTDTVSTPVSGNELLEAGEECDCGSPGNPCCDAATCKLRQGAQCAEGLCCDQCRFMKKGTVCRIARGDDMDDYCNGISAGCPRNPFHA</sequence>
<reference key="1">
    <citation type="journal article" date="2005" name="Toxicon">
        <title>Primary structure of brevilysin L4, an enzymatically active fragment of a disintegrin precursor from Gloydius halys brevicaudus venom.</title>
        <authorList>
            <person name="Deshimaru M."/>
            <person name="Ichihara M."/>
            <person name="Hattori T."/>
            <person name="Koba K."/>
            <person name="Terada S."/>
        </authorList>
    </citation>
    <scope>NUCLEOTIDE SEQUENCE [MRNA]</scope>
    <scope>PROTEIN SEQUENCE OF 29-237</scope>
    <scope>MASS SPECTROMETRY</scope>
    <scope>3D-STRUCTURE MODELING</scope>
    <source>
        <tissue>Venom</tissue>
        <tissue>Venom gland</tissue>
    </source>
</reference>
<reference key="2">
    <citation type="journal article" date="2004" name="Acta Biochim. Biophys. Sin.">
        <title>Cloning and characterization of adinbitor, a novel disintegrin from the snake venom of Agkistrodon halys brevicaudus stejneger.</title>
        <authorList>
            <person name="Wang J.-H."/>
            <person name="Wu Y."/>
            <person name="Ren F."/>
            <person name="Lu L."/>
            <person name="Zhao B.-C."/>
        </authorList>
    </citation>
    <scope>NUCLEOTIDE SEQUENCE [MRNA] OF 244-319</scope>
    <scope>FUNCTION</scope>
    <scope>ACTIVITY REGULATION</scope>
    <source>
        <tissue>Venom gland</tissue>
    </source>
</reference>
<reference key="3">
    <citation type="journal article" date="2000" name="Fukuoka Univ. Sci. Rep.">
        <title>Isolation and primary structures of platelet aggregation inhibitors from Gloydius halys brevicaudus venom.</title>
        <authorList>
            <person name="Oshikawa K."/>
            <person name="Yasukouchi Y."/>
            <person name="Terada S."/>
        </authorList>
    </citation>
    <scope>PROTEIN SEQUENCE OF 247-319</scope>
    <scope>FUNCTION</scope>
    <source>
        <tissue>Venom</tissue>
    </source>
</reference>